<proteinExistence type="inferred from homology"/>
<comment type="function">
    <text evidence="1">Binds to 23S rRNA. Forms part of two intersubunit bridges in the 70S ribosome.</text>
</comment>
<comment type="subunit">
    <text evidence="1">Part of the 50S ribosomal subunit. Forms a cluster with proteins L3 and L19. In the 70S ribosome, L14 and L19 interact and together make contacts with the 16S rRNA in bridges B5 and B8.</text>
</comment>
<comment type="similarity">
    <text evidence="1">Belongs to the universal ribosomal protein uL14 family.</text>
</comment>
<protein>
    <recommendedName>
        <fullName evidence="1">Large ribosomal subunit protein uL14</fullName>
    </recommendedName>
    <alternativeName>
        <fullName evidence="2">50S ribosomal protein L14</fullName>
    </alternativeName>
</protein>
<sequence length="122" mass="13439">MIQTETRLEVADNTGAREVMCIKVLGGSKRRYASIGDIIKVTVKEATPRGRVKKGEIYNAVVVRTAKGVRRQDGSLIKFDGNAAVLLNAKLEPIGTRIFGPVTRELRSERFMKIVSLAPEVL</sequence>
<gene>
    <name evidence="1" type="primary">rplN</name>
    <name type="ordered locus">Bphyt_3634</name>
</gene>
<organism>
    <name type="scientific">Paraburkholderia phytofirmans (strain DSM 17436 / LMG 22146 / PsJN)</name>
    <name type="common">Burkholderia phytofirmans</name>
    <dbReference type="NCBI Taxonomy" id="398527"/>
    <lineage>
        <taxon>Bacteria</taxon>
        <taxon>Pseudomonadati</taxon>
        <taxon>Pseudomonadota</taxon>
        <taxon>Betaproteobacteria</taxon>
        <taxon>Burkholderiales</taxon>
        <taxon>Burkholderiaceae</taxon>
        <taxon>Paraburkholderia</taxon>
    </lineage>
</organism>
<reference key="1">
    <citation type="journal article" date="2011" name="J. Bacteriol.">
        <title>Complete genome sequence of the plant growth-promoting endophyte Burkholderia phytofirmans strain PsJN.</title>
        <authorList>
            <person name="Weilharter A."/>
            <person name="Mitter B."/>
            <person name="Shin M.V."/>
            <person name="Chain P.S."/>
            <person name="Nowak J."/>
            <person name="Sessitsch A."/>
        </authorList>
    </citation>
    <scope>NUCLEOTIDE SEQUENCE [LARGE SCALE GENOMIC DNA]</scope>
    <source>
        <strain>DSM 17436 / LMG 22146 / PsJN</strain>
    </source>
</reference>
<accession>B2T741</accession>
<name>RL14_PARPJ</name>
<dbReference type="EMBL" id="CP001052">
    <property type="protein sequence ID" value="ACD18024.1"/>
    <property type="molecule type" value="Genomic_DNA"/>
</dbReference>
<dbReference type="RefSeq" id="WP_006052212.1">
    <property type="nucleotide sequence ID" value="NC_010681.1"/>
</dbReference>
<dbReference type="SMR" id="B2T741"/>
<dbReference type="STRING" id="398527.Bphyt_3634"/>
<dbReference type="GeneID" id="97311002"/>
<dbReference type="KEGG" id="bpy:Bphyt_3634"/>
<dbReference type="eggNOG" id="COG0093">
    <property type="taxonomic scope" value="Bacteria"/>
</dbReference>
<dbReference type="HOGENOM" id="CLU_095071_2_1_4"/>
<dbReference type="OrthoDB" id="9806379at2"/>
<dbReference type="Proteomes" id="UP000001739">
    <property type="component" value="Chromosome 1"/>
</dbReference>
<dbReference type="GO" id="GO:0022625">
    <property type="term" value="C:cytosolic large ribosomal subunit"/>
    <property type="evidence" value="ECO:0007669"/>
    <property type="project" value="TreeGrafter"/>
</dbReference>
<dbReference type="GO" id="GO:0070180">
    <property type="term" value="F:large ribosomal subunit rRNA binding"/>
    <property type="evidence" value="ECO:0007669"/>
    <property type="project" value="TreeGrafter"/>
</dbReference>
<dbReference type="GO" id="GO:0003735">
    <property type="term" value="F:structural constituent of ribosome"/>
    <property type="evidence" value="ECO:0007669"/>
    <property type="project" value="InterPro"/>
</dbReference>
<dbReference type="GO" id="GO:0006412">
    <property type="term" value="P:translation"/>
    <property type="evidence" value="ECO:0007669"/>
    <property type="project" value="UniProtKB-UniRule"/>
</dbReference>
<dbReference type="CDD" id="cd00337">
    <property type="entry name" value="Ribosomal_uL14"/>
    <property type="match status" value="1"/>
</dbReference>
<dbReference type="FunFam" id="2.40.150.20:FF:000001">
    <property type="entry name" value="50S ribosomal protein L14"/>
    <property type="match status" value="1"/>
</dbReference>
<dbReference type="Gene3D" id="2.40.150.20">
    <property type="entry name" value="Ribosomal protein L14"/>
    <property type="match status" value="1"/>
</dbReference>
<dbReference type="HAMAP" id="MF_01367">
    <property type="entry name" value="Ribosomal_uL14"/>
    <property type="match status" value="1"/>
</dbReference>
<dbReference type="InterPro" id="IPR000218">
    <property type="entry name" value="Ribosomal_uL14"/>
</dbReference>
<dbReference type="InterPro" id="IPR005745">
    <property type="entry name" value="Ribosomal_uL14_bac-type"/>
</dbReference>
<dbReference type="InterPro" id="IPR019972">
    <property type="entry name" value="Ribosomal_uL14_CS"/>
</dbReference>
<dbReference type="InterPro" id="IPR036853">
    <property type="entry name" value="Ribosomal_uL14_sf"/>
</dbReference>
<dbReference type="NCBIfam" id="TIGR01067">
    <property type="entry name" value="rplN_bact"/>
    <property type="match status" value="1"/>
</dbReference>
<dbReference type="PANTHER" id="PTHR11761">
    <property type="entry name" value="50S/60S RIBOSOMAL PROTEIN L14/L23"/>
    <property type="match status" value="1"/>
</dbReference>
<dbReference type="PANTHER" id="PTHR11761:SF3">
    <property type="entry name" value="LARGE RIBOSOMAL SUBUNIT PROTEIN UL14M"/>
    <property type="match status" value="1"/>
</dbReference>
<dbReference type="Pfam" id="PF00238">
    <property type="entry name" value="Ribosomal_L14"/>
    <property type="match status" value="1"/>
</dbReference>
<dbReference type="SMART" id="SM01374">
    <property type="entry name" value="Ribosomal_L14"/>
    <property type="match status" value="1"/>
</dbReference>
<dbReference type="SUPFAM" id="SSF50193">
    <property type="entry name" value="Ribosomal protein L14"/>
    <property type="match status" value="1"/>
</dbReference>
<dbReference type="PROSITE" id="PS00049">
    <property type="entry name" value="RIBOSOMAL_L14"/>
    <property type="match status" value="1"/>
</dbReference>
<keyword id="KW-0687">Ribonucleoprotein</keyword>
<keyword id="KW-0689">Ribosomal protein</keyword>
<keyword id="KW-0694">RNA-binding</keyword>
<keyword id="KW-0699">rRNA-binding</keyword>
<evidence type="ECO:0000255" key="1">
    <source>
        <dbReference type="HAMAP-Rule" id="MF_01367"/>
    </source>
</evidence>
<evidence type="ECO:0000305" key="2"/>
<feature type="chain" id="PRO_1000144236" description="Large ribosomal subunit protein uL14">
    <location>
        <begin position="1"/>
        <end position="122"/>
    </location>
</feature>